<keyword id="KW-1185">Reference proteome</keyword>
<accession>Q7VMZ9</accession>
<evidence type="ECO:0000255" key="1">
    <source>
        <dbReference type="HAMAP-Rule" id="MF_00048"/>
    </source>
</evidence>
<organism>
    <name type="scientific">Haemophilus ducreyi (strain 35000HP / ATCC 700724)</name>
    <dbReference type="NCBI Taxonomy" id="233412"/>
    <lineage>
        <taxon>Bacteria</taxon>
        <taxon>Pseudomonadati</taxon>
        <taxon>Pseudomonadota</taxon>
        <taxon>Gammaproteobacteria</taxon>
        <taxon>Pasteurellales</taxon>
        <taxon>Pasteurellaceae</taxon>
        <taxon>Haemophilus</taxon>
    </lineage>
</organism>
<comment type="similarity">
    <text evidence="1">Belongs to the UPF0102 family.</text>
</comment>
<sequence>MALWKRLTNRTNRSQGACFEQKARLFLEQQGLKFIQANQHFKCGELDLVMQQGDTIVFVEVRQRKNNRFGSALESIDYRKQQKWLDAANMWLLTEYNQSLDTANCRFDVVAFEAEQPPLWIQNFLG</sequence>
<protein>
    <recommendedName>
        <fullName evidence="1">UPF0102 protein HD_0802</fullName>
    </recommendedName>
</protein>
<name>Y802_HAEDU</name>
<proteinExistence type="inferred from homology"/>
<dbReference type="EMBL" id="AE017143">
    <property type="protein sequence ID" value="AAP95702.1"/>
    <property type="molecule type" value="Genomic_DNA"/>
</dbReference>
<dbReference type="RefSeq" id="WP_010944752.1">
    <property type="nucleotide sequence ID" value="NC_002940.2"/>
</dbReference>
<dbReference type="SMR" id="Q7VMZ9"/>
<dbReference type="STRING" id="233412.HD_0802"/>
<dbReference type="KEGG" id="hdu:HD_0802"/>
<dbReference type="eggNOG" id="COG0792">
    <property type="taxonomic scope" value="Bacteria"/>
</dbReference>
<dbReference type="HOGENOM" id="CLU_115353_1_0_6"/>
<dbReference type="OrthoDB" id="9794876at2"/>
<dbReference type="Proteomes" id="UP000001022">
    <property type="component" value="Chromosome"/>
</dbReference>
<dbReference type="GO" id="GO:0003676">
    <property type="term" value="F:nucleic acid binding"/>
    <property type="evidence" value="ECO:0007669"/>
    <property type="project" value="InterPro"/>
</dbReference>
<dbReference type="Gene3D" id="3.40.1350.10">
    <property type="match status" value="1"/>
</dbReference>
<dbReference type="HAMAP" id="MF_00048">
    <property type="entry name" value="UPF0102"/>
    <property type="match status" value="1"/>
</dbReference>
<dbReference type="InterPro" id="IPR011335">
    <property type="entry name" value="Restrct_endonuc-II-like"/>
</dbReference>
<dbReference type="InterPro" id="IPR011856">
    <property type="entry name" value="tRNA_endonuc-like_dom_sf"/>
</dbReference>
<dbReference type="InterPro" id="IPR003509">
    <property type="entry name" value="UPF0102_YraN-like"/>
</dbReference>
<dbReference type="NCBIfam" id="NF009150">
    <property type="entry name" value="PRK12497.1-3"/>
    <property type="match status" value="1"/>
</dbReference>
<dbReference type="NCBIfam" id="TIGR00252">
    <property type="entry name" value="YraN family protein"/>
    <property type="match status" value="1"/>
</dbReference>
<dbReference type="PANTHER" id="PTHR34039">
    <property type="entry name" value="UPF0102 PROTEIN YRAN"/>
    <property type="match status" value="1"/>
</dbReference>
<dbReference type="PANTHER" id="PTHR34039:SF1">
    <property type="entry name" value="UPF0102 PROTEIN YRAN"/>
    <property type="match status" value="1"/>
</dbReference>
<dbReference type="Pfam" id="PF02021">
    <property type="entry name" value="UPF0102"/>
    <property type="match status" value="1"/>
</dbReference>
<dbReference type="SUPFAM" id="SSF52980">
    <property type="entry name" value="Restriction endonuclease-like"/>
    <property type="match status" value="1"/>
</dbReference>
<gene>
    <name type="ordered locus">HD_0802</name>
</gene>
<reference key="1">
    <citation type="submission" date="2003-06" db="EMBL/GenBank/DDBJ databases">
        <title>The complete genome sequence of Haemophilus ducreyi.</title>
        <authorList>
            <person name="Munson R.S. Jr."/>
            <person name="Ray W.C."/>
            <person name="Mahairas G."/>
            <person name="Sabo P."/>
            <person name="Mungur R."/>
            <person name="Johnson L."/>
            <person name="Nguyen D."/>
            <person name="Wang J."/>
            <person name="Forst C."/>
            <person name="Hood L."/>
        </authorList>
    </citation>
    <scope>NUCLEOTIDE SEQUENCE [LARGE SCALE GENOMIC DNA]</scope>
    <source>
        <strain>35000HP / ATCC 700724</strain>
    </source>
</reference>
<feature type="chain" id="PRO_0000167353" description="UPF0102 protein HD_0802">
    <location>
        <begin position="1"/>
        <end position="126"/>
    </location>
</feature>